<accession>O82238</accession>
<accession>Q0WRL8</accession>
<comment type="function">
    <text evidence="1">Accessory subunit of the mitochondrial membrane respiratory chain NADH dehydrogenase (Complex I), that is believed not to be involved in catalysis. Complex I functions in the transfer of electrons from NADH to the respiratory chain. The immediate electron acceptor for the enzyme is believed to be ubiquinone (By similarity).</text>
</comment>
<comment type="subunit">
    <text>Complex I is composed of at least 49 different subunits. This is a component of the iron-sulfur (IP) fragment of the enzyme.</text>
</comment>
<comment type="subcellular location">
    <subcellularLocation>
        <location evidence="1">Mitochondrion</location>
    </subcellularLocation>
    <subcellularLocation>
        <location evidence="1">Mitochondrion inner membrane</location>
        <topology evidence="1">Peripheral membrane protein</topology>
    </subcellularLocation>
    <subcellularLocation>
        <location evidence="4">Mitochondrion intermembrane space</location>
    </subcellularLocation>
</comment>
<comment type="alternative products">
    <event type="alternative splicing"/>
    <isoform>
        <id>O82238-1</id>
        <name>1</name>
        <sequence type="displayed"/>
    </isoform>
    <text>A number of isoforms are produced. According to EST sequences.</text>
</comment>
<comment type="domain">
    <text evidence="1">Contains two C-X9-C motifs that are predicted to form a helix-coil-helix structure, permitting the formation of intramolecular disulfide bonds.</text>
</comment>
<comment type="similarity">
    <text evidence="4">Belongs to the complex I NDUFS5 subunit family.</text>
</comment>
<dbReference type="EMBL" id="AC005309">
    <property type="protein sequence ID" value="AAC63625.1"/>
    <property type="molecule type" value="Genomic_DNA"/>
</dbReference>
<dbReference type="EMBL" id="CP002685">
    <property type="protein sequence ID" value="AEC10876.1"/>
    <property type="molecule type" value="Genomic_DNA"/>
</dbReference>
<dbReference type="EMBL" id="AK228285">
    <property type="protein sequence ID" value="BAF00231.1"/>
    <property type="molecule type" value="mRNA"/>
</dbReference>
<dbReference type="PIR" id="D84918">
    <property type="entry name" value="D84918"/>
</dbReference>
<dbReference type="RefSeq" id="NP_182291.1">
    <molecule id="O82238-1"/>
    <property type="nucleotide sequence ID" value="NM_130337.6"/>
</dbReference>
<dbReference type="PDB" id="7AR7">
    <property type="method" value="EM"/>
    <property type="resolution" value="3.72 A"/>
    <property type="chains" value="e=37-100"/>
</dbReference>
<dbReference type="PDBsum" id="7AR7"/>
<dbReference type="EMDB" id="EMD-11875"/>
<dbReference type="SMR" id="O82238"/>
<dbReference type="FunCoup" id="O82238">
    <property type="interactions" value="836"/>
</dbReference>
<dbReference type="IntAct" id="O82238">
    <property type="interactions" value="2"/>
</dbReference>
<dbReference type="STRING" id="3702.O82238"/>
<dbReference type="PaxDb" id="3702-AT2G47690.1"/>
<dbReference type="EnsemblPlants" id="AT2G47690.1">
    <molecule id="O82238-1"/>
    <property type="protein sequence ID" value="AT2G47690.1"/>
    <property type="gene ID" value="AT2G47690"/>
</dbReference>
<dbReference type="GeneID" id="819382"/>
<dbReference type="Gramene" id="AT2G47690.1">
    <molecule id="O82238-1"/>
    <property type="protein sequence ID" value="AT2G47690.1"/>
    <property type="gene ID" value="AT2G47690"/>
</dbReference>
<dbReference type="KEGG" id="ath:AT2G47690"/>
<dbReference type="Araport" id="AT2G47690"/>
<dbReference type="TAIR" id="AT2G47690"/>
<dbReference type="eggNOG" id="ENOG502S4B1">
    <property type="taxonomic scope" value="Eukaryota"/>
</dbReference>
<dbReference type="HOGENOM" id="CLU_162182_1_0_1"/>
<dbReference type="InParanoid" id="O82238"/>
<dbReference type="OMA" id="GCYDFWM"/>
<dbReference type="PhylomeDB" id="O82238"/>
<dbReference type="BioCyc" id="ARA:AT2G47690-MONOMER"/>
<dbReference type="BioCyc" id="MetaCyc:AT2G47690-MONOMER"/>
<dbReference type="PRO" id="PR:O82238"/>
<dbReference type="Proteomes" id="UP000006548">
    <property type="component" value="Chromosome 2"/>
</dbReference>
<dbReference type="ExpressionAtlas" id="O82238">
    <property type="expression patterns" value="baseline and differential"/>
</dbReference>
<dbReference type="GO" id="GO:0005743">
    <property type="term" value="C:mitochondrial inner membrane"/>
    <property type="evidence" value="ECO:0007669"/>
    <property type="project" value="UniProtKB-SubCell"/>
</dbReference>
<dbReference type="GO" id="GO:0005758">
    <property type="term" value="C:mitochondrial intermembrane space"/>
    <property type="evidence" value="ECO:0007669"/>
    <property type="project" value="UniProtKB-SubCell"/>
</dbReference>
<dbReference type="GO" id="GO:0031966">
    <property type="term" value="C:mitochondrial membrane"/>
    <property type="evidence" value="ECO:0000314"/>
    <property type="project" value="TAIR"/>
</dbReference>
<dbReference type="GO" id="GO:0005739">
    <property type="term" value="C:mitochondrion"/>
    <property type="evidence" value="ECO:0000314"/>
    <property type="project" value="TAIR"/>
</dbReference>
<dbReference type="GO" id="GO:0045271">
    <property type="term" value="C:respiratory chain complex I"/>
    <property type="evidence" value="ECO:0000314"/>
    <property type="project" value="TAIR"/>
</dbReference>
<dbReference type="GO" id="GO:0009853">
    <property type="term" value="P:photorespiration"/>
    <property type="evidence" value="ECO:0000304"/>
    <property type="project" value="TAIR"/>
</dbReference>
<dbReference type="CDD" id="cd24141">
    <property type="entry name" value="NDUFS5-like"/>
    <property type="match status" value="1"/>
</dbReference>
<dbReference type="InterPro" id="IPR019342">
    <property type="entry name" value="NADH_UbQ_OxRdtase_FeS-su5"/>
</dbReference>
<dbReference type="PANTHER" id="PTHR15224">
    <property type="entry name" value="NADH DEHYDROGENASE [UBIQUINONE] IRON-SULFUR PROTEIN 5"/>
    <property type="match status" value="1"/>
</dbReference>
<dbReference type="PANTHER" id="PTHR15224:SF7">
    <property type="entry name" value="NADH DEHYDROGENASE [UBIQUINONE] IRON-SULFUR PROTEIN 5-A-RELATED"/>
    <property type="match status" value="1"/>
</dbReference>
<dbReference type="Pfam" id="PF10200">
    <property type="entry name" value="Ndufs5"/>
    <property type="match status" value="1"/>
</dbReference>
<dbReference type="PROSITE" id="PS51808">
    <property type="entry name" value="CHCH"/>
    <property type="match status" value="1"/>
</dbReference>
<keyword id="KW-0002">3D-structure</keyword>
<keyword id="KW-0025">Alternative splicing</keyword>
<keyword id="KW-1015">Disulfide bond</keyword>
<keyword id="KW-0249">Electron transport</keyword>
<keyword id="KW-0472">Membrane</keyword>
<keyword id="KW-0496">Mitochondrion</keyword>
<keyword id="KW-0999">Mitochondrion inner membrane</keyword>
<keyword id="KW-1185">Reference proteome</keyword>
<keyword id="KW-0679">Respiratory chain</keyword>
<keyword id="KW-0813">Transport</keyword>
<reference key="1">
    <citation type="journal article" date="1999" name="Nature">
        <title>Sequence and analysis of chromosome 2 of the plant Arabidopsis thaliana.</title>
        <authorList>
            <person name="Lin X."/>
            <person name="Kaul S."/>
            <person name="Rounsley S.D."/>
            <person name="Shea T.P."/>
            <person name="Benito M.-I."/>
            <person name="Town C.D."/>
            <person name="Fujii C.Y."/>
            <person name="Mason T.M."/>
            <person name="Bowman C.L."/>
            <person name="Barnstead M.E."/>
            <person name="Feldblyum T.V."/>
            <person name="Buell C.R."/>
            <person name="Ketchum K.A."/>
            <person name="Lee J.J."/>
            <person name="Ronning C.M."/>
            <person name="Koo H.L."/>
            <person name="Moffat K.S."/>
            <person name="Cronin L.A."/>
            <person name="Shen M."/>
            <person name="Pai G."/>
            <person name="Van Aken S."/>
            <person name="Umayam L."/>
            <person name="Tallon L.J."/>
            <person name="Gill J.E."/>
            <person name="Adams M.D."/>
            <person name="Carrera A.J."/>
            <person name="Creasy T.H."/>
            <person name="Goodman H.M."/>
            <person name="Somerville C.R."/>
            <person name="Copenhaver G.P."/>
            <person name="Preuss D."/>
            <person name="Nierman W.C."/>
            <person name="White O."/>
            <person name="Eisen J.A."/>
            <person name="Salzberg S.L."/>
            <person name="Fraser C.M."/>
            <person name="Venter J.C."/>
        </authorList>
    </citation>
    <scope>NUCLEOTIDE SEQUENCE [LARGE SCALE GENOMIC DNA]</scope>
    <source>
        <strain>cv. Columbia</strain>
    </source>
</reference>
<reference key="2">
    <citation type="journal article" date="2017" name="Plant J.">
        <title>Araport11: a complete reannotation of the Arabidopsis thaliana reference genome.</title>
        <authorList>
            <person name="Cheng C.Y."/>
            <person name="Krishnakumar V."/>
            <person name="Chan A.P."/>
            <person name="Thibaud-Nissen F."/>
            <person name="Schobel S."/>
            <person name="Town C.D."/>
        </authorList>
    </citation>
    <scope>GENOME REANNOTATION</scope>
    <source>
        <strain>cv. Columbia</strain>
    </source>
</reference>
<reference key="3">
    <citation type="submission" date="2006-07" db="EMBL/GenBank/DDBJ databases">
        <title>Large-scale analysis of RIKEN Arabidopsis full-length (RAFL) cDNAs.</title>
        <authorList>
            <person name="Totoki Y."/>
            <person name="Seki M."/>
            <person name="Ishida J."/>
            <person name="Nakajima M."/>
            <person name="Enju A."/>
            <person name="Kamiya A."/>
            <person name="Narusaka M."/>
            <person name="Shin-i T."/>
            <person name="Nakagawa M."/>
            <person name="Sakamoto N."/>
            <person name="Oishi K."/>
            <person name="Kohara Y."/>
            <person name="Kobayashi M."/>
            <person name="Toyoda A."/>
            <person name="Sakaki Y."/>
            <person name="Sakurai T."/>
            <person name="Iida K."/>
            <person name="Akiyama K."/>
            <person name="Satou M."/>
            <person name="Toyoda T."/>
            <person name="Konagaya A."/>
            <person name="Carninci P."/>
            <person name="Kawai J."/>
            <person name="Hayashizaki Y."/>
            <person name="Shinozaki K."/>
        </authorList>
    </citation>
    <scope>NUCLEOTIDE SEQUENCE [LARGE SCALE MRNA] OF 28-118</scope>
    <source>
        <strain>cv. Columbia</strain>
    </source>
</reference>
<gene>
    <name type="ordered locus">At2g47690</name>
    <name type="ORF">F17A22.8</name>
</gene>
<proteinExistence type="evidence at protein level"/>
<name>NDS5A_ARATH</name>
<sequence length="118" mass="13965">MDISGHPKTRTRTIFDEVDEPVWFCCVLPIWVGEEMASGWGITGNKGRCYDFWMDFSECMSHCREPKDCTLLREDYLECLHHSKEFQRRNRIYKEEQRKLRAASRKGEEAGDGTHNHH</sequence>
<protein>
    <recommendedName>
        <fullName>NADH dehydrogenase [ubiquinone] iron-sulfur protein 5-A</fullName>
    </recommendedName>
</protein>
<evidence type="ECO:0000250" key="1"/>
<evidence type="ECO:0000255" key="2">
    <source>
        <dbReference type="PROSITE-ProRule" id="PRU01150"/>
    </source>
</evidence>
<evidence type="ECO:0000256" key="3">
    <source>
        <dbReference type="SAM" id="MobiDB-lite"/>
    </source>
</evidence>
<evidence type="ECO:0000305" key="4"/>
<feature type="chain" id="PRO_0000410792" description="NADH dehydrogenase [ubiquinone] iron-sulfur protein 5-A">
    <location>
        <begin position="1"/>
        <end position="118"/>
    </location>
</feature>
<feature type="domain" description="CHCH" evidence="2">
    <location>
        <begin position="46"/>
        <end position="87"/>
    </location>
</feature>
<feature type="region of interest" description="Disordered" evidence="3">
    <location>
        <begin position="98"/>
        <end position="118"/>
    </location>
</feature>
<feature type="short sequence motif" description="Cx9C motif 1" evidence="2">
    <location>
        <begin position="49"/>
        <end position="59"/>
    </location>
</feature>
<feature type="short sequence motif" description="Cx9C motif 2" evidence="2">
    <location>
        <begin position="69"/>
        <end position="79"/>
    </location>
</feature>
<feature type="disulfide bond" evidence="2">
    <location>
        <begin position="49"/>
        <end position="79"/>
    </location>
</feature>
<feature type="disulfide bond" evidence="2">
    <location>
        <begin position="59"/>
        <end position="69"/>
    </location>
</feature>
<organism>
    <name type="scientific">Arabidopsis thaliana</name>
    <name type="common">Mouse-ear cress</name>
    <dbReference type="NCBI Taxonomy" id="3702"/>
    <lineage>
        <taxon>Eukaryota</taxon>
        <taxon>Viridiplantae</taxon>
        <taxon>Streptophyta</taxon>
        <taxon>Embryophyta</taxon>
        <taxon>Tracheophyta</taxon>
        <taxon>Spermatophyta</taxon>
        <taxon>Magnoliopsida</taxon>
        <taxon>eudicotyledons</taxon>
        <taxon>Gunneridae</taxon>
        <taxon>Pentapetalae</taxon>
        <taxon>rosids</taxon>
        <taxon>malvids</taxon>
        <taxon>Brassicales</taxon>
        <taxon>Brassicaceae</taxon>
        <taxon>Camelineae</taxon>
        <taxon>Arabidopsis</taxon>
    </lineage>
</organism>